<proteinExistence type="inferred from homology"/>
<sequence>MADNFNFELVSPERLLLSEQVIDVVIPASEGEMTVMAHHAPTMTTIKPGVVKVHSASGKKQDYVVFGGFADILPTGCTLLAESAIPVEDLNQDELTRRINAAKAELEDAEHHEHKSRLEHFIMELTHLSGSIQKD</sequence>
<protein>
    <recommendedName>
        <fullName evidence="1">ATP synthase epsilon chain</fullName>
    </recommendedName>
    <alternativeName>
        <fullName evidence="1">ATP synthase F1 sector epsilon subunit</fullName>
    </alternativeName>
    <alternativeName>
        <fullName evidence="1">F-ATPase epsilon subunit</fullName>
    </alternativeName>
</protein>
<organism>
    <name type="scientific">Rhizobium rhizogenes (strain K84 / ATCC BAA-868)</name>
    <name type="common">Agrobacterium radiobacter</name>
    <dbReference type="NCBI Taxonomy" id="311403"/>
    <lineage>
        <taxon>Bacteria</taxon>
        <taxon>Pseudomonadati</taxon>
        <taxon>Pseudomonadota</taxon>
        <taxon>Alphaproteobacteria</taxon>
        <taxon>Hyphomicrobiales</taxon>
        <taxon>Rhizobiaceae</taxon>
        <taxon>Rhizobium/Agrobacterium group</taxon>
        <taxon>Rhizobium</taxon>
    </lineage>
</organism>
<name>ATPE_RHIR8</name>
<gene>
    <name evidence="1" type="primary">atpC</name>
    <name type="ordered locus">Arad_4304</name>
</gene>
<feature type="chain" id="PRO_1000146304" description="ATP synthase epsilon chain">
    <location>
        <begin position="1"/>
        <end position="135"/>
    </location>
</feature>
<comment type="function">
    <text evidence="1">Produces ATP from ADP in the presence of a proton gradient across the membrane.</text>
</comment>
<comment type="subunit">
    <text evidence="1">F-type ATPases have 2 components, CF(1) - the catalytic core - and CF(0) - the membrane proton channel. CF(1) has five subunits: alpha(3), beta(3), gamma(1), delta(1), epsilon(1). CF(0) has three main subunits: a, b and c.</text>
</comment>
<comment type="subcellular location">
    <subcellularLocation>
        <location evidence="1">Cell inner membrane</location>
        <topology evidence="1">Peripheral membrane protein</topology>
    </subcellularLocation>
</comment>
<comment type="similarity">
    <text evidence="1">Belongs to the ATPase epsilon chain family.</text>
</comment>
<evidence type="ECO:0000255" key="1">
    <source>
        <dbReference type="HAMAP-Rule" id="MF_00530"/>
    </source>
</evidence>
<dbReference type="EMBL" id="CP000628">
    <property type="protein sequence ID" value="ACM28040.1"/>
    <property type="molecule type" value="Genomic_DNA"/>
</dbReference>
<dbReference type="RefSeq" id="WP_012652646.1">
    <property type="nucleotide sequence ID" value="NC_011985.1"/>
</dbReference>
<dbReference type="SMR" id="B9JBZ4"/>
<dbReference type="STRING" id="311403.Arad_4304"/>
<dbReference type="KEGG" id="ara:Arad_4304"/>
<dbReference type="eggNOG" id="COG0355">
    <property type="taxonomic scope" value="Bacteria"/>
</dbReference>
<dbReference type="HOGENOM" id="CLU_084338_2_1_5"/>
<dbReference type="Proteomes" id="UP000001600">
    <property type="component" value="Chromosome 1"/>
</dbReference>
<dbReference type="GO" id="GO:0005886">
    <property type="term" value="C:plasma membrane"/>
    <property type="evidence" value="ECO:0007669"/>
    <property type="project" value="UniProtKB-SubCell"/>
</dbReference>
<dbReference type="GO" id="GO:0045259">
    <property type="term" value="C:proton-transporting ATP synthase complex"/>
    <property type="evidence" value="ECO:0007669"/>
    <property type="project" value="UniProtKB-KW"/>
</dbReference>
<dbReference type="GO" id="GO:0005524">
    <property type="term" value="F:ATP binding"/>
    <property type="evidence" value="ECO:0007669"/>
    <property type="project" value="UniProtKB-UniRule"/>
</dbReference>
<dbReference type="GO" id="GO:0046933">
    <property type="term" value="F:proton-transporting ATP synthase activity, rotational mechanism"/>
    <property type="evidence" value="ECO:0007669"/>
    <property type="project" value="UniProtKB-UniRule"/>
</dbReference>
<dbReference type="CDD" id="cd12152">
    <property type="entry name" value="F1-ATPase_delta"/>
    <property type="match status" value="1"/>
</dbReference>
<dbReference type="Gene3D" id="2.60.15.10">
    <property type="entry name" value="F0F1 ATP synthase delta/epsilon subunit, N-terminal"/>
    <property type="match status" value="1"/>
</dbReference>
<dbReference type="HAMAP" id="MF_00530">
    <property type="entry name" value="ATP_synth_epsil_bac"/>
    <property type="match status" value="1"/>
</dbReference>
<dbReference type="InterPro" id="IPR001469">
    <property type="entry name" value="ATP_synth_F1_dsu/esu"/>
</dbReference>
<dbReference type="InterPro" id="IPR020546">
    <property type="entry name" value="ATP_synth_F1_dsu/esu_N"/>
</dbReference>
<dbReference type="InterPro" id="IPR036771">
    <property type="entry name" value="ATPsynth_dsu/esu_N"/>
</dbReference>
<dbReference type="NCBIfam" id="TIGR01216">
    <property type="entry name" value="ATP_synt_epsi"/>
    <property type="match status" value="1"/>
</dbReference>
<dbReference type="NCBIfam" id="NF001851">
    <property type="entry name" value="PRK00571.2-4"/>
    <property type="match status" value="1"/>
</dbReference>
<dbReference type="PANTHER" id="PTHR13822">
    <property type="entry name" value="ATP SYNTHASE DELTA/EPSILON CHAIN"/>
    <property type="match status" value="1"/>
</dbReference>
<dbReference type="PANTHER" id="PTHR13822:SF10">
    <property type="entry name" value="ATP SYNTHASE EPSILON CHAIN, CHLOROPLASTIC"/>
    <property type="match status" value="1"/>
</dbReference>
<dbReference type="Pfam" id="PF02823">
    <property type="entry name" value="ATP-synt_DE_N"/>
    <property type="match status" value="1"/>
</dbReference>
<dbReference type="SUPFAM" id="SSF51344">
    <property type="entry name" value="Epsilon subunit of F1F0-ATP synthase N-terminal domain"/>
    <property type="match status" value="1"/>
</dbReference>
<keyword id="KW-0066">ATP synthesis</keyword>
<keyword id="KW-0997">Cell inner membrane</keyword>
<keyword id="KW-1003">Cell membrane</keyword>
<keyword id="KW-0139">CF(1)</keyword>
<keyword id="KW-0375">Hydrogen ion transport</keyword>
<keyword id="KW-0406">Ion transport</keyword>
<keyword id="KW-0472">Membrane</keyword>
<keyword id="KW-0813">Transport</keyword>
<accession>B9JBZ4</accession>
<reference key="1">
    <citation type="journal article" date="2009" name="J. Bacteriol.">
        <title>Genome sequences of three Agrobacterium biovars help elucidate the evolution of multichromosome genomes in bacteria.</title>
        <authorList>
            <person name="Slater S.C."/>
            <person name="Goldman B.S."/>
            <person name="Goodner B."/>
            <person name="Setubal J.C."/>
            <person name="Farrand S.K."/>
            <person name="Nester E.W."/>
            <person name="Burr T.J."/>
            <person name="Banta L."/>
            <person name="Dickerman A.W."/>
            <person name="Paulsen I."/>
            <person name="Otten L."/>
            <person name="Suen G."/>
            <person name="Welch R."/>
            <person name="Almeida N.F."/>
            <person name="Arnold F."/>
            <person name="Burton O.T."/>
            <person name="Du Z."/>
            <person name="Ewing A."/>
            <person name="Godsy E."/>
            <person name="Heisel S."/>
            <person name="Houmiel K.L."/>
            <person name="Jhaveri J."/>
            <person name="Lu J."/>
            <person name="Miller N.M."/>
            <person name="Norton S."/>
            <person name="Chen Q."/>
            <person name="Phoolcharoen W."/>
            <person name="Ohlin V."/>
            <person name="Ondrusek D."/>
            <person name="Pride N."/>
            <person name="Stricklin S.L."/>
            <person name="Sun J."/>
            <person name="Wheeler C."/>
            <person name="Wilson L."/>
            <person name="Zhu H."/>
            <person name="Wood D.W."/>
        </authorList>
    </citation>
    <scope>NUCLEOTIDE SEQUENCE [LARGE SCALE GENOMIC DNA]</scope>
    <source>
        <strain>K84 / ATCC BAA-868</strain>
    </source>
</reference>